<dbReference type="EMBL" id="AC122684">
    <property type="status" value="NOT_ANNOTATED_CDS"/>
    <property type="molecule type" value="Genomic_DNA"/>
</dbReference>
<dbReference type="EMBL" id="AF179770">
    <property type="protein sequence ID" value="AAF40353.1"/>
    <property type="molecule type" value="Genomic_DNA"/>
</dbReference>
<dbReference type="CCDS" id="CCDS31819.1"/>
<dbReference type="RefSeq" id="NP_001375427.1">
    <property type="nucleotide sequence ID" value="NM_001388498.1"/>
</dbReference>
<dbReference type="RefSeq" id="NP_473445.1">
    <property type="nucleotide sequence ID" value="NM_054104.2"/>
</dbReference>
<dbReference type="SMR" id="Q9NZP0"/>
<dbReference type="FunCoup" id="Q9NZP0">
    <property type="interactions" value="418"/>
</dbReference>
<dbReference type="STRING" id="9606.ENSP00000493034"/>
<dbReference type="GlyCosmos" id="Q9NZP0">
    <property type="glycosylation" value="1 site, No reported glycans"/>
</dbReference>
<dbReference type="GlyGen" id="Q9NZP0">
    <property type="glycosylation" value="1 site"/>
</dbReference>
<dbReference type="iPTMnet" id="Q9NZP0"/>
<dbReference type="PhosphoSitePlus" id="Q9NZP0"/>
<dbReference type="BioMuta" id="OR6C3"/>
<dbReference type="DMDM" id="85541048"/>
<dbReference type="PaxDb" id="9606-ENSP00000368989"/>
<dbReference type="Antibodypedia" id="58539">
    <property type="antibodies" value="47 antibodies from 16 providers"/>
</dbReference>
<dbReference type="DNASU" id="254786"/>
<dbReference type="Ensembl" id="ENST00000641364.1">
    <property type="protein sequence ID" value="ENSP00000493034.1"/>
    <property type="gene ID" value="ENSG00000205329.3"/>
</dbReference>
<dbReference type="Ensembl" id="ENST00000641740.2">
    <property type="protein sequence ID" value="ENSP00000493380.1"/>
    <property type="gene ID" value="ENSG00000205329.3"/>
</dbReference>
<dbReference type="GeneID" id="254786"/>
<dbReference type="KEGG" id="hsa:254786"/>
<dbReference type="MANE-Select" id="ENST00000641740.2">
    <property type="protein sequence ID" value="ENSP00000493380.1"/>
    <property type="RefSeq nucleotide sequence ID" value="NM_001388498.1"/>
    <property type="RefSeq protein sequence ID" value="NP_001375427.1"/>
</dbReference>
<dbReference type="UCSC" id="uc010spj.2">
    <property type="organism name" value="human"/>
</dbReference>
<dbReference type="AGR" id="HGNC:15437"/>
<dbReference type="CTD" id="254786"/>
<dbReference type="DisGeNET" id="254786"/>
<dbReference type="GeneCards" id="OR6C3"/>
<dbReference type="HGNC" id="HGNC:15437">
    <property type="gene designation" value="OR6C3"/>
</dbReference>
<dbReference type="HPA" id="ENSG00000205329">
    <property type="expression patterns" value="Not detected"/>
</dbReference>
<dbReference type="neXtProt" id="NX_Q9NZP0"/>
<dbReference type="PharmGKB" id="PA32581"/>
<dbReference type="VEuPathDB" id="HostDB:ENSG00000205329"/>
<dbReference type="eggNOG" id="ENOG502RDVH">
    <property type="taxonomic scope" value="Eukaryota"/>
</dbReference>
<dbReference type="GeneTree" id="ENSGT01130000278269"/>
<dbReference type="HOGENOM" id="CLU_012526_1_1_1"/>
<dbReference type="InParanoid" id="Q9NZP0"/>
<dbReference type="OMA" id="DYCASNI"/>
<dbReference type="OrthoDB" id="9902777at2759"/>
<dbReference type="PAN-GO" id="Q9NZP0">
    <property type="GO annotations" value="1 GO annotation based on evolutionary models"/>
</dbReference>
<dbReference type="PhylomeDB" id="Q9NZP0"/>
<dbReference type="TreeFam" id="TF336833"/>
<dbReference type="PathwayCommons" id="Q9NZP0"/>
<dbReference type="Reactome" id="R-HSA-9752946">
    <property type="pathway name" value="Expression and translocation of olfactory receptors"/>
</dbReference>
<dbReference type="BioGRID-ORCS" id="254786">
    <property type="hits" value="2 hits in 737 CRISPR screens"/>
</dbReference>
<dbReference type="GeneWiki" id="OR6C3"/>
<dbReference type="GenomeRNAi" id="254786"/>
<dbReference type="Pharos" id="Q9NZP0">
    <property type="development level" value="Tdark"/>
</dbReference>
<dbReference type="PRO" id="PR:Q9NZP0"/>
<dbReference type="Proteomes" id="UP000005640">
    <property type="component" value="Chromosome 12"/>
</dbReference>
<dbReference type="RNAct" id="Q9NZP0">
    <property type="molecule type" value="protein"/>
</dbReference>
<dbReference type="Bgee" id="ENSG00000205329">
    <property type="expression patterns" value="Expressed in primordial germ cell in gonad and 1 other cell type or tissue"/>
</dbReference>
<dbReference type="ExpressionAtlas" id="Q9NZP0">
    <property type="expression patterns" value="differential"/>
</dbReference>
<dbReference type="GO" id="GO:0016020">
    <property type="term" value="C:membrane"/>
    <property type="evidence" value="ECO:0000303"/>
    <property type="project" value="UniProtKB"/>
</dbReference>
<dbReference type="GO" id="GO:0005886">
    <property type="term" value="C:plasma membrane"/>
    <property type="evidence" value="ECO:0007669"/>
    <property type="project" value="UniProtKB-SubCell"/>
</dbReference>
<dbReference type="GO" id="GO:0004930">
    <property type="term" value="F:G protein-coupled receptor activity"/>
    <property type="evidence" value="ECO:0007669"/>
    <property type="project" value="UniProtKB-KW"/>
</dbReference>
<dbReference type="GO" id="GO:0004984">
    <property type="term" value="F:olfactory receptor activity"/>
    <property type="evidence" value="ECO:0000318"/>
    <property type="project" value="GO_Central"/>
</dbReference>
<dbReference type="GO" id="GO:0007608">
    <property type="term" value="P:sensory perception of smell"/>
    <property type="evidence" value="ECO:0000303"/>
    <property type="project" value="UniProtKB"/>
</dbReference>
<dbReference type="CDD" id="cd15912">
    <property type="entry name" value="7tmA_OR6C-like"/>
    <property type="match status" value="1"/>
</dbReference>
<dbReference type="FunFam" id="1.10.1220.70:FF:000001">
    <property type="entry name" value="Olfactory receptor"/>
    <property type="match status" value="1"/>
</dbReference>
<dbReference type="FunFam" id="1.20.1070.10:FF:000013">
    <property type="entry name" value="Olfactory receptor"/>
    <property type="match status" value="1"/>
</dbReference>
<dbReference type="Gene3D" id="1.20.1070.10">
    <property type="entry name" value="Rhodopsin 7-helix transmembrane proteins"/>
    <property type="match status" value="1"/>
</dbReference>
<dbReference type="InterPro" id="IPR000276">
    <property type="entry name" value="GPCR_Rhodpsn"/>
</dbReference>
<dbReference type="InterPro" id="IPR017452">
    <property type="entry name" value="GPCR_Rhodpsn_7TM"/>
</dbReference>
<dbReference type="InterPro" id="IPR000725">
    <property type="entry name" value="Olfact_rcpt"/>
</dbReference>
<dbReference type="InterPro" id="IPR047132">
    <property type="entry name" value="Olfact_rcpt_6C-like"/>
</dbReference>
<dbReference type="PANTHER" id="PTHR26454">
    <property type="entry name" value="OLFACTORY RECEPTOR"/>
    <property type="match status" value="1"/>
</dbReference>
<dbReference type="PANTHER" id="PTHR26454:SF39">
    <property type="entry name" value="OLFACTORY RECEPTOR 6C3"/>
    <property type="match status" value="1"/>
</dbReference>
<dbReference type="Pfam" id="PF13853">
    <property type="entry name" value="7tm_4"/>
    <property type="match status" value="1"/>
</dbReference>
<dbReference type="PRINTS" id="PR00237">
    <property type="entry name" value="GPCRRHODOPSN"/>
</dbReference>
<dbReference type="PRINTS" id="PR00245">
    <property type="entry name" value="OLFACTORYR"/>
</dbReference>
<dbReference type="SUPFAM" id="SSF81321">
    <property type="entry name" value="Family A G protein-coupled receptor-like"/>
    <property type="match status" value="1"/>
</dbReference>
<dbReference type="PROSITE" id="PS00237">
    <property type="entry name" value="G_PROTEIN_RECEP_F1_1"/>
    <property type="match status" value="1"/>
</dbReference>
<dbReference type="PROSITE" id="PS50262">
    <property type="entry name" value="G_PROTEIN_RECEP_F1_2"/>
    <property type="match status" value="1"/>
</dbReference>
<reference key="1">
    <citation type="journal article" date="2006" name="Nature">
        <title>The finished DNA sequence of human chromosome 12.</title>
        <authorList>
            <person name="Scherer S.E."/>
            <person name="Muzny D.M."/>
            <person name="Buhay C.J."/>
            <person name="Chen R."/>
            <person name="Cree A."/>
            <person name="Ding Y."/>
            <person name="Dugan-Rocha S."/>
            <person name="Gill R."/>
            <person name="Gunaratne P."/>
            <person name="Harris R.A."/>
            <person name="Hawes A.C."/>
            <person name="Hernandez J."/>
            <person name="Hodgson A.V."/>
            <person name="Hume J."/>
            <person name="Jackson A."/>
            <person name="Khan Z.M."/>
            <person name="Kovar-Smith C."/>
            <person name="Lewis L.R."/>
            <person name="Lozado R.J."/>
            <person name="Metzker M.L."/>
            <person name="Milosavljevic A."/>
            <person name="Miner G.R."/>
            <person name="Montgomery K.T."/>
            <person name="Morgan M.B."/>
            <person name="Nazareth L.V."/>
            <person name="Scott G."/>
            <person name="Sodergren E."/>
            <person name="Song X.-Z."/>
            <person name="Steffen D."/>
            <person name="Lovering R.C."/>
            <person name="Wheeler D.A."/>
            <person name="Worley K.C."/>
            <person name="Yuan Y."/>
            <person name="Zhang Z."/>
            <person name="Adams C.Q."/>
            <person name="Ansari-Lari M.A."/>
            <person name="Ayele M."/>
            <person name="Brown M.J."/>
            <person name="Chen G."/>
            <person name="Chen Z."/>
            <person name="Clerc-Blankenburg K.P."/>
            <person name="Davis C."/>
            <person name="Delgado O."/>
            <person name="Dinh H.H."/>
            <person name="Draper H."/>
            <person name="Gonzalez-Garay M.L."/>
            <person name="Havlak P."/>
            <person name="Jackson L.R."/>
            <person name="Jacob L.S."/>
            <person name="Kelly S.H."/>
            <person name="Li L."/>
            <person name="Li Z."/>
            <person name="Liu J."/>
            <person name="Liu W."/>
            <person name="Lu J."/>
            <person name="Maheshwari M."/>
            <person name="Nguyen B.-V."/>
            <person name="Okwuonu G.O."/>
            <person name="Pasternak S."/>
            <person name="Perez L.M."/>
            <person name="Plopper F.J.H."/>
            <person name="Santibanez J."/>
            <person name="Shen H."/>
            <person name="Tabor P.E."/>
            <person name="Verduzco D."/>
            <person name="Waldron L."/>
            <person name="Wang Q."/>
            <person name="Williams G.A."/>
            <person name="Zhang J."/>
            <person name="Zhou J."/>
            <person name="Allen C.C."/>
            <person name="Amin A.G."/>
            <person name="Anyalebechi V."/>
            <person name="Bailey M."/>
            <person name="Barbaria J.A."/>
            <person name="Bimage K.E."/>
            <person name="Bryant N.P."/>
            <person name="Burch P.E."/>
            <person name="Burkett C.E."/>
            <person name="Burrell K.L."/>
            <person name="Calderon E."/>
            <person name="Cardenas V."/>
            <person name="Carter K."/>
            <person name="Casias K."/>
            <person name="Cavazos I."/>
            <person name="Cavazos S.R."/>
            <person name="Ceasar H."/>
            <person name="Chacko J."/>
            <person name="Chan S.N."/>
            <person name="Chavez D."/>
            <person name="Christopoulos C."/>
            <person name="Chu J."/>
            <person name="Cockrell R."/>
            <person name="Cox C.D."/>
            <person name="Dang M."/>
            <person name="Dathorne S.R."/>
            <person name="David R."/>
            <person name="Davis C.M."/>
            <person name="Davy-Carroll L."/>
            <person name="Deshazo D.R."/>
            <person name="Donlin J.E."/>
            <person name="D'Souza L."/>
            <person name="Eaves K.A."/>
            <person name="Egan A."/>
            <person name="Emery-Cohen A.J."/>
            <person name="Escotto M."/>
            <person name="Flagg N."/>
            <person name="Forbes L.D."/>
            <person name="Gabisi A.M."/>
            <person name="Garza M."/>
            <person name="Hamilton C."/>
            <person name="Henderson N."/>
            <person name="Hernandez O."/>
            <person name="Hines S."/>
            <person name="Hogues M.E."/>
            <person name="Huang M."/>
            <person name="Idlebird D.G."/>
            <person name="Johnson R."/>
            <person name="Jolivet A."/>
            <person name="Jones S."/>
            <person name="Kagan R."/>
            <person name="King L.M."/>
            <person name="Leal B."/>
            <person name="Lebow H."/>
            <person name="Lee S."/>
            <person name="LeVan J.M."/>
            <person name="Lewis L.C."/>
            <person name="London P."/>
            <person name="Lorensuhewa L.M."/>
            <person name="Loulseged H."/>
            <person name="Lovett D.A."/>
            <person name="Lucier A."/>
            <person name="Lucier R.L."/>
            <person name="Ma J."/>
            <person name="Madu R.C."/>
            <person name="Mapua P."/>
            <person name="Martindale A.D."/>
            <person name="Martinez E."/>
            <person name="Massey E."/>
            <person name="Mawhiney S."/>
            <person name="Meador M.G."/>
            <person name="Mendez S."/>
            <person name="Mercado C."/>
            <person name="Mercado I.C."/>
            <person name="Merritt C.E."/>
            <person name="Miner Z.L."/>
            <person name="Minja E."/>
            <person name="Mitchell T."/>
            <person name="Mohabbat F."/>
            <person name="Mohabbat K."/>
            <person name="Montgomery B."/>
            <person name="Moore N."/>
            <person name="Morris S."/>
            <person name="Munidasa M."/>
            <person name="Ngo R.N."/>
            <person name="Nguyen N.B."/>
            <person name="Nickerson E."/>
            <person name="Nwaokelemeh O.O."/>
            <person name="Nwokenkwo S."/>
            <person name="Obregon M."/>
            <person name="Oguh M."/>
            <person name="Oragunye N."/>
            <person name="Oviedo R.J."/>
            <person name="Parish B.J."/>
            <person name="Parker D.N."/>
            <person name="Parrish J."/>
            <person name="Parks K.L."/>
            <person name="Paul H.A."/>
            <person name="Payton B.A."/>
            <person name="Perez A."/>
            <person name="Perrin W."/>
            <person name="Pickens A."/>
            <person name="Primus E.L."/>
            <person name="Pu L.-L."/>
            <person name="Puazo M."/>
            <person name="Quiles M.M."/>
            <person name="Quiroz J.B."/>
            <person name="Rabata D."/>
            <person name="Reeves K."/>
            <person name="Ruiz S.J."/>
            <person name="Shao H."/>
            <person name="Sisson I."/>
            <person name="Sonaike T."/>
            <person name="Sorelle R.P."/>
            <person name="Sutton A.E."/>
            <person name="Svatek A.F."/>
            <person name="Svetz L.A."/>
            <person name="Tamerisa K.S."/>
            <person name="Taylor T.R."/>
            <person name="Teague B."/>
            <person name="Thomas N."/>
            <person name="Thorn R.D."/>
            <person name="Trejos Z.Y."/>
            <person name="Trevino B.K."/>
            <person name="Ukegbu O.N."/>
            <person name="Urban J.B."/>
            <person name="Vasquez L.I."/>
            <person name="Vera V.A."/>
            <person name="Villasana D.M."/>
            <person name="Wang L."/>
            <person name="Ward-Moore S."/>
            <person name="Warren J.T."/>
            <person name="Wei X."/>
            <person name="White F."/>
            <person name="Williamson A.L."/>
            <person name="Wleczyk R."/>
            <person name="Wooden H.S."/>
            <person name="Wooden S.H."/>
            <person name="Yen J."/>
            <person name="Yoon L."/>
            <person name="Yoon V."/>
            <person name="Zorrilla S.E."/>
            <person name="Nelson D."/>
            <person name="Kucherlapati R."/>
            <person name="Weinstock G."/>
            <person name="Gibbs R.A."/>
        </authorList>
    </citation>
    <scope>NUCLEOTIDE SEQUENCE [LARGE SCALE GENOMIC DNA]</scope>
</reference>
<reference key="2">
    <citation type="journal article" date="2000" name="Proc. Natl. Acad. Sci. U.S.A.">
        <title>The olfactory receptor gene repertoire in primates and mouse: evidence for reduction of the functional fraction in primates.</title>
        <authorList>
            <person name="Rouquier S."/>
            <person name="Blancher A."/>
            <person name="Giorgi D."/>
        </authorList>
    </citation>
    <scope>NUCLEOTIDE SEQUENCE [GENOMIC DNA] OF 121-282</scope>
</reference>
<keyword id="KW-1003">Cell membrane</keyword>
<keyword id="KW-1015">Disulfide bond</keyword>
<keyword id="KW-0297">G-protein coupled receptor</keyword>
<keyword id="KW-0325">Glycoprotein</keyword>
<keyword id="KW-0472">Membrane</keyword>
<keyword id="KW-0552">Olfaction</keyword>
<keyword id="KW-0675">Receptor</keyword>
<keyword id="KW-1185">Reference proteome</keyword>
<keyword id="KW-0716">Sensory transduction</keyword>
<keyword id="KW-0807">Transducer</keyword>
<keyword id="KW-0812">Transmembrane</keyword>
<keyword id="KW-1133">Transmembrane helix</keyword>
<feature type="chain" id="PRO_0000150625" description="Olfactory receptor 6C3">
    <location>
        <begin position="1"/>
        <end position="311"/>
    </location>
</feature>
<feature type="topological domain" description="Extracellular" evidence="1">
    <location>
        <begin position="1"/>
        <end position="22"/>
    </location>
</feature>
<feature type="transmembrane region" description="Helical; Name=1" evidence="1">
    <location>
        <begin position="23"/>
        <end position="43"/>
    </location>
</feature>
<feature type="topological domain" description="Cytoplasmic" evidence="1">
    <location>
        <begin position="44"/>
        <end position="51"/>
    </location>
</feature>
<feature type="transmembrane region" description="Helical; Name=2" evidence="1">
    <location>
        <begin position="52"/>
        <end position="72"/>
    </location>
</feature>
<feature type="topological domain" description="Extracellular" evidence="1">
    <location>
        <begin position="73"/>
        <end position="96"/>
    </location>
</feature>
<feature type="transmembrane region" description="Helical; Name=3" evidence="1">
    <location>
        <begin position="97"/>
        <end position="117"/>
    </location>
</feature>
<feature type="topological domain" description="Cytoplasmic" evidence="1">
    <location>
        <begin position="118"/>
        <end position="136"/>
    </location>
</feature>
<feature type="transmembrane region" description="Helical; Name=4" evidence="1">
    <location>
        <begin position="137"/>
        <end position="157"/>
    </location>
</feature>
<feature type="topological domain" description="Extracellular" evidence="1">
    <location>
        <begin position="158"/>
        <end position="194"/>
    </location>
</feature>
<feature type="transmembrane region" description="Helical; Name=5" evidence="1">
    <location>
        <begin position="195"/>
        <end position="214"/>
    </location>
</feature>
<feature type="topological domain" description="Cytoplasmic" evidence="1">
    <location>
        <begin position="215"/>
        <end position="234"/>
    </location>
</feature>
<feature type="transmembrane region" description="Helical; Name=6" evidence="1">
    <location>
        <begin position="235"/>
        <end position="255"/>
    </location>
</feature>
<feature type="topological domain" description="Extracellular" evidence="1">
    <location>
        <begin position="256"/>
        <end position="268"/>
    </location>
</feature>
<feature type="transmembrane region" description="Helical; Name=7" evidence="1">
    <location>
        <begin position="269"/>
        <end position="289"/>
    </location>
</feature>
<feature type="topological domain" description="Cytoplasmic" evidence="1">
    <location>
        <begin position="290"/>
        <end position="311"/>
    </location>
</feature>
<feature type="glycosylation site" description="N-linked (GlcNAc...) asparagine" evidence="1">
    <location>
        <position position="2"/>
    </location>
</feature>
<feature type="disulfide bond" evidence="2">
    <location>
        <begin position="94"/>
        <end position="186"/>
    </location>
</feature>
<feature type="sequence variant" id="VAR_053218" description="In dbSNP:rs4318060.">
    <original>S</original>
    <variation>L</variation>
    <location>
        <position position="69"/>
    </location>
</feature>
<feature type="sequence variant" id="VAR_053219" description="In dbSNP:rs11835321.">
    <original>M</original>
    <variation>T</variation>
    <location>
        <position position="133"/>
    </location>
</feature>
<feature type="sequence variant" id="VAR_034245" description="In dbSNP:rs11832940.">
    <original>A</original>
    <variation>S</variation>
    <location>
        <position position="234"/>
    </location>
</feature>
<proteinExistence type="inferred from homology"/>
<gene>
    <name type="primary">OR6C3</name>
</gene>
<evidence type="ECO:0000255" key="1"/>
<evidence type="ECO:0000255" key="2">
    <source>
        <dbReference type="PROSITE-ProRule" id="PRU00521"/>
    </source>
</evidence>
<evidence type="ECO:0000305" key="3"/>
<name>OR6C3_HUMAN</name>
<comment type="function">
    <text evidence="3">Odorant receptor.</text>
</comment>
<comment type="subcellular location">
    <subcellularLocation>
        <location>Cell membrane</location>
        <topology>Multi-pass membrane protein</topology>
    </subcellularLocation>
</comment>
<comment type="similarity">
    <text evidence="2">Belongs to the G-protein coupled receptor 1 family.</text>
</comment>
<comment type="online information" name="Human Olfactory Receptor Data Exploratorium (HORDE)">
    <link uri="http://genome.weizmann.ac.il/horde/card/index/symbol:OR6C3"/>
</comment>
<organism>
    <name type="scientific">Homo sapiens</name>
    <name type="common">Human</name>
    <dbReference type="NCBI Taxonomy" id="9606"/>
    <lineage>
        <taxon>Eukaryota</taxon>
        <taxon>Metazoa</taxon>
        <taxon>Chordata</taxon>
        <taxon>Craniata</taxon>
        <taxon>Vertebrata</taxon>
        <taxon>Euteleostomi</taxon>
        <taxon>Mammalia</taxon>
        <taxon>Eutheria</taxon>
        <taxon>Euarchontoglires</taxon>
        <taxon>Primates</taxon>
        <taxon>Haplorrhini</taxon>
        <taxon>Catarrhini</taxon>
        <taxon>Hominidae</taxon>
        <taxon>Homo</taxon>
    </lineage>
</organism>
<accession>Q9NZP0</accession>
<sequence length="311" mass="35531">MNHTMVTEFVLLGLSDDPDLQIVIFLFLFITYILSVTGNLTIITLTFVDSHLQTPMYFFLRNFSFLEISFTTVCIPRFLGAIITRNKTISYNNCAAQLFFFIFMGVTEFYILTAMSYDRYVAICKPLHYTSIMNRKLCTLLVLCAWLSGFLTIFPPLMLLLQLDYCASNVIDHFACDYFPLLQLSCSDTWLLEVIGFYFALVTLLFTLALVILSYMYIIRTILRIPSASQRKKAFSTCSSHMIVISISYGSCIFMYANPSAKEKASLTKGIAILNTSVAPMLNPFIYTLRNQQVKQAFKNVVHKVVFYANQ</sequence>
<protein>
    <recommendedName>
        <fullName>Olfactory receptor 6C3</fullName>
    </recommendedName>
    <alternativeName>
        <fullName>HSA8</fullName>
    </alternativeName>
</protein>